<gene>
    <name type="primary">Adh</name>
</gene>
<organism>
    <name type="scientific">Drosophila lebanonensis</name>
    <name type="common">Fruit fly</name>
    <name type="synonym">Scaptodrosophila lebanonensis</name>
    <dbReference type="NCBI Taxonomy" id="7225"/>
    <lineage>
        <taxon>Eukaryota</taxon>
        <taxon>Metazoa</taxon>
        <taxon>Ecdysozoa</taxon>
        <taxon>Arthropoda</taxon>
        <taxon>Hexapoda</taxon>
        <taxon>Insecta</taxon>
        <taxon>Pterygota</taxon>
        <taxon>Neoptera</taxon>
        <taxon>Endopterygota</taxon>
        <taxon>Diptera</taxon>
        <taxon>Brachycera</taxon>
        <taxon>Muscomorpha</taxon>
        <taxon>Ephydroidea</taxon>
        <taxon>Drosophilidae</taxon>
        <taxon>Scaptodrosophila</taxon>
    </lineage>
</organism>
<sequence>MDLTNKNVIFVAALGGIGLDTSRELVKRNLKNFVILDRVENPTALAELKAINPKVNITFHTYDVTVPVAESKKLLKKIFDQLKTVDILINGAGILDDHQIERTIAINFTGLVNTTTAILDFWDKRKGGPGGIIANICSVTGFNAIHQVPVYSASKAAVVSFTNSLAKLAPITGVTAYSINPGITRTPLVHTFNSWLDVEPRVAELLLSHPTQTSEQCGQNFVKAIEANKNGAIWKLDLGTLEAIEWTKHWDSHI</sequence>
<dbReference type="EC" id="1.1.1.1"/>
<dbReference type="EMBL" id="X53429">
    <property type="protein sequence ID" value="CAA37520.1"/>
    <property type="status" value="ALT_SEQ"/>
    <property type="molecule type" value="Genomic_DNA"/>
</dbReference>
<dbReference type="EMBL" id="X54814">
    <property type="protein sequence ID" value="CAA38583.1"/>
    <property type="molecule type" value="Genomic_DNA"/>
</dbReference>
<dbReference type="EMBL" id="M97637">
    <property type="protein sequence ID" value="AAA28355.1"/>
    <property type="molecule type" value="Genomic_DNA"/>
</dbReference>
<dbReference type="PIR" id="S12695">
    <property type="entry name" value="DEFFRL"/>
</dbReference>
<dbReference type="PDB" id="1A4U">
    <property type="method" value="X-ray"/>
    <property type="resolution" value="1.92 A"/>
    <property type="chains" value="A/B=1-254"/>
</dbReference>
<dbReference type="PDB" id="1B14">
    <property type="method" value="X-ray"/>
    <property type="resolution" value="2.40 A"/>
    <property type="chains" value="A/B=1-254"/>
</dbReference>
<dbReference type="PDB" id="1B15">
    <property type="method" value="X-ray"/>
    <property type="resolution" value="2.20 A"/>
    <property type="chains" value="A/B=1-254"/>
</dbReference>
<dbReference type="PDB" id="1B16">
    <property type="method" value="X-ray"/>
    <property type="resolution" value="1.40 A"/>
    <property type="chains" value="A/B=1-254"/>
</dbReference>
<dbReference type="PDB" id="1B2L">
    <property type="method" value="X-ray"/>
    <property type="resolution" value="1.60 A"/>
    <property type="chains" value="A=1-254"/>
</dbReference>
<dbReference type="PDB" id="1SBY">
    <property type="method" value="X-ray"/>
    <property type="resolution" value="1.10 A"/>
    <property type="chains" value="A/B=1-254"/>
</dbReference>
<dbReference type="PDB" id="3RJ5">
    <property type="method" value="X-ray"/>
    <property type="resolution" value="1.45 A"/>
    <property type="chains" value="A/B=1-254"/>
</dbReference>
<dbReference type="PDB" id="3RJ9">
    <property type="method" value="X-ray"/>
    <property type="resolution" value="1.98 A"/>
    <property type="chains" value="A/B/C/D/E/F=1-254"/>
</dbReference>
<dbReference type="PDBsum" id="1A4U"/>
<dbReference type="PDBsum" id="1B14"/>
<dbReference type="PDBsum" id="1B15"/>
<dbReference type="PDBsum" id="1B16"/>
<dbReference type="PDBsum" id="1B2L"/>
<dbReference type="PDBsum" id="1SBY"/>
<dbReference type="PDBsum" id="3RJ5"/>
<dbReference type="PDBsum" id="3RJ9"/>
<dbReference type="SMR" id="P10807"/>
<dbReference type="MINT" id="P10807"/>
<dbReference type="iPTMnet" id="P10807"/>
<dbReference type="FlyBase" id="FBgn0012438">
    <property type="gene designation" value="Dleb\Adh"/>
</dbReference>
<dbReference type="OrthoDB" id="417891at2759"/>
<dbReference type="SABIO-RK" id="P10807"/>
<dbReference type="EvolutionaryTrace" id="P10807"/>
<dbReference type="Proteomes" id="UP000504634">
    <property type="component" value="Unplaced"/>
</dbReference>
<dbReference type="GO" id="GO:0005737">
    <property type="term" value="C:cytoplasm"/>
    <property type="evidence" value="ECO:0007669"/>
    <property type="project" value="TreeGrafter"/>
</dbReference>
<dbReference type="GO" id="GO:0004022">
    <property type="term" value="F:alcohol dehydrogenase (NAD+) activity"/>
    <property type="evidence" value="ECO:0000250"/>
    <property type="project" value="UniProtKB"/>
</dbReference>
<dbReference type="GO" id="GO:0042802">
    <property type="term" value="F:identical protein binding"/>
    <property type="evidence" value="ECO:0000353"/>
    <property type="project" value="IntAct"/>
</dbReference>
<dbReference type="GO" id="GO:0006066">
    <property type="term" value="P:alcohol metabolic process"/>
    <property type="evidence" value="ECO:0007669"/>
    <property type="project" value="InterPro"/>
</dbReference>
<dbReference type="CDD" id="cd05323">
    <property type="entry name" value="ADH_SDR_c_like"/>
    <property type="match status" value="1"/>
</dbReference>
<dbReference type="FunFam" id="3.40.50.720:FF:000302">
    <property type="entry name" value="Alcohol dehydrogenase"/>
    <property type="match status" value="1"/>
</dbReference>
<dbReference type="Gene3D" id="3.40.50.720">
    <property type="entry name" value="NAD(P)-binding Rossmann-like Domain"/>
    <property type="match status" value="1"/>
</dbReference>
<dbReference type="InterPro" id="IPR002425">
    <property type="entry name" value="ADH_Drosophila-type"/>
</dbReference>
<dbReference type="InterPro" id="IPR036291">
    <property type="entry name" value="NAD(P)-bd_dom_sf"/>
</dbReference>
<dbReference type="InterPro" id="IPR020904">
    <property type="entry name" value="Sc_DH/Rdtase_CS"/>
</dbReference>
<dbReference type="InterPro" id="IPR002347">
    <property type="entry name" value="SDR_fam"/>
</dbReference>
<dbReference type="PANTHER" id="PTHR44229">
    <property type="entry name" value="15-HYDROXYPROSTAGLANDIN DEHYDROGENASE [NAD(+)]"/>
    <property type="match status" value="1"/>
</dbReference>
<dbReference type="PANTHER" id="PTHR44229:SF8">
    <property type="entry name" value="ALCOHOL DEHYDROGENASE-RELATED"/>
    <property type="match status" value="1"/>
</dbReference>
<dbReference type="Pfam" id="PF00106">
    <property type="entry name" value="adh_short"/>
    <property type="match status" value="1"/>
</dbReference>
<dbReference type="PRINTS" id="PR01168">
    <property type="entry name" value="ALCDHDRGNASE"/>
</dbReference>
<dbReference type="PRINTS" id="PR01167">
    <property type="entry name" value="INSADHFAMILY"/>
</dbReference>
<dbReference type="PRINTS" id="PR00080">
    <property type="entry name" value="SDRFAMILY"/>
</dbReference>
<dbReference type="SUPFAM" id="SSF51735">
    <property type="entry name" value="NAD(P)-binding Rossmann-fold domains"/>
    <property type="match status" value="1"/>
</dbReference>
<dbReference type="PROSITE" id="PS00061">
    <property type="entry name" value="ADH_SHORT"/>
    <property type="match status" value="1"/>
</dbReference>
<name>ADH_DROLE</name>
<proteinExistence type="evidence at protein level"/>
<accession>P10807</accession>
<evidence type="ECO:0000255" key="1">
    <source>
        <dbReference type="PROSITE-ProRule" id="PRU10001"/>
    </source>
</evidence>
<evidence type="ECO:0000269" key="2">
    <source>
    </source>
</evidence>
<evidence type="ECO:0000269" key="3">
    <source>
    </source>
</evidence>
<evidence type="ECO:0000305" key="4"/>
<evidence type="ECO:0007829" key="5">
    <source>
        <dbReference type="PDB" id="1SBY"/>
    </source>
</evidence>
<reference key="1">
    <citation type="journal article" date="1989" name="Eur. J. Biochem.">
        <title>The primary structure of alcohol dehydrogenase from Drosophila lebanonensis. Extensive variation within insect 'short-chain' alcohol dehydrogenase lacking zinc.</title>
        <authorList>
            <person name="Villarroya A."/>
            <person name="Juan E."/>
            <person name="Egestad B."/>
            <person name="Joernvall H."/>
        </authorList>
    </citation>
    <scope>PROTEIN SEQUENCE</scope>
    <scope>ACETYLATION AT MET-1</scope>
</reference>
<reference key="2">
    <citation type="journal article" date="1990" name="Nucleic Acids Res.">
        <title>Nucleotide sequence of the Adh gene of Drosophila lebanonensis.</title>
        <authorList>
            <person name="Juan E."/>
            <person name="Papaceit M."/>
            <person name="Quintana A."/>
        </authorList>
    </citation>
    <scope>NUCLEOTIDE SEQUENCE [GENOMIC DNA]</scope>
    <source>
        <strain>323G</strain>
    </source>
</reference>
<reference key="3">
    <citation type="journal article" date="1990" name="Nucleic Acids Res.">
        <title>Nucleotide sequence of the Adh gene of Drosophila lebanonensis.</title>
        <authorList>
            <person name="Albalat R."/>
            <person name="Gonzalez-Duarte R."/>
        </authorList>
    </citation>
    <scope>NUCLEOTIDE SEQUENCE [GENOMIC DNA]</scope>
</reference>
<reference key="4">
    <citation type="journal article" date="1991" name="Nucleic Acids Res.">
        <authorList>
            <person name="Albalat R."/>
            <person name="Gonzalez-Duarte R."/>
        </authorList>
    </citation>
    <scope>ERRATUM OF PUBMED:2251140</scope>
</reference>
<reference key="5">
    <citation type="journal article" date="1993" name="Gene">
        <title>Adh and Adh-dup sequences of Drosophila lebanonensis and D. immigrans: interspecies comparisons.</title>
        <authorList>
            <person name="Albalat R."/>
            <person name="Gonzalez-Duarte R."/>
        </authorList>
    </citation>
    <scope>NUCLEOTIDE SEQUENCE [GENOMIC DNA]</scope>
</reference>
<reference key="6">
    <citation type="journal article" date="1991" name="J. Mol. Evol.">
        <title>ADH and phylogenetic relationships of Drosophila lebanonesis (Scaptodrosophila).</title>
        <authorList>
            <person name="Villarroya A."/>
            <person name="Juan E."/>
        </authorList>
    </citation>
    <scope>PHYLOGENETIC RELATIONSHIP TO OTHER DROSOPHILA ADH</scope>
</reference>
<reference key="7">
    <citation type="journal article" date="1998" name="J. Mol. Biol.">
        <title>The refined crystal structure of Drosophila lebanonensis alcohol dehydrogenase at 1.9-A resolution.</title>
        <authorList>
            <person name="Benach J."/>
            <person name="Atrian S."/>
            <person name="Gonzalez-Duarte R."/>
            <person name="Ladenstein R."/>
        </authorList>
    </citation>
    <scope>X-RAY CRYSTALLOGRAPHY (1.92 ANGSTROMS)</scope>
</reference>
<reference key="8">
    <citation type="journal article" date="1999" name="J. Mol. Biol.">
        <title>The catalytic reaction and inhibition mechanism of Drosophila alcohol dehydrogenase: observation of an enzyme-bound NAD-ketone adduct at 1.4-A resolution by X-ray crystallography.</title>
        <authorList>
            <person name="Benach J."/>
            <person name="Atrian S."/>
            <person name="Gonzalez-Duarte R."/>
            <person name="Ladenstein R."/>
        </authorList>
    </citation>
    <scope>X-RAY CRYSTALLOGRAPHY (1.4 ANGSTROMS) IN COMPLEX WITH NAD AND PRODUCT</scope>
</reference>
<feature type="chain" id="PRO_0000054471" description="Alcohol dehydrogenase">
    <location>
        <begin position="1"/>
        <end position="254"/>
    </location>
</feature>
<feature type="active site" description="Proton acceptor">
    <location>
        <position position="151"/>
    </location>
</feature>
<feature type="binding site" evidence="2">
    <location>
        <begin position="10"/>
        <end position="33"/>
    </location>
    <ligand>
        <name>NAD(+)</name>
        <dbReference type="ChEBI" id="CHEBI:57540"/>
    </ligand>
</feature>
<feature type="binding site">
    <location>
        <position position="138"/>
    </location>
    <ligand>
        <name>substrate</name>
    </ligand>
</feature>
<feature type="modified residue" description="N-acetylmethionine" evidence="3">
    <location>
        <position position="1"/>
    </location>
</feature>
<feature type="strand" evidence="5">
    <location>
        <begin position="7"/>
        <end position="11"/>
    </location>
</feature>
<feature type="turn" evidence="5">
    <location>
        <begin position="12"/>
        <end position="14"/>
    </location>
</feature>
<feature type="helix" evidence="5">
    <location>
        <begin position="16"/>
        <end position="27"/>
    </location>
</feature>
<feature type="strand" evidence="5">
    <location>
        <begin position="31"/>
        <end position="39"/>
    </location>
</feature>
<feature type="helix" evidence="5">
    <location>
        <begin position="42"/>
        <end position="51"/>
    </location>
</feature>
<feature type="strand" evidence="5">
    <location>
        <begin position="55"/>
        <end position="61"/>
    </location>
</feature>
<feature type="helix" evidence="5">
    <location>
        <begin position="68"/>
        <end position="82"/>
    </location>
</feature>
<feature type="strand" evidence="5">
    <location>
        <begin position="87"/>
        <end position="90"/>
    </location>
</feature>
<feature type="helix" evidence="5">
    <location>
        <begin position="100"/>
        <end position="107"/>
    </location>
</feature>
<feature type="helix" evidence="5">
    <location>
        <begin position="109"/>
        <end position="122"/>
    </location>
</feature>
<feature type="helix" evidence="5">
    <location>
        <begin position="124"/>
        <end position="126"/>
    </location>
</feature>
<feature type="strand" evidence="5">
    <location>
        <begin position="131"/>
        <end position="136"/>
    </location>
</feature>
<feature type="helix" evidence="5">
    <location>
        <begin position="139"/>
        <end position="141"/>
    </location>
</feature>
<feature type="helix" evidence="5">
    <location>
        <begin position="149"/>
        <end position="172"/>
    </location>
</feature>
<feature type="strand" evidence="5">
    <location>
        <begin position="173"/>
        <end position="181"/>
    </location>
</feature>
<feature type="strand" evidence="5">
    <location>
        <begin position="183"/>
        <end position="186"/>
    </location>
</feature>
<feature type="helix" evidence="5">
    <location>
        <begin position="187"/>
        <end position="190"/>
    </location>
</feature>
<feature type="helix" evidence="5">
    <location>
        <begin position="195"/>
        <end position="197"/>
    </location>
</feature>
<feature type="helix" evidence="5">
    <location>
        <begin position="202"/>
        <end position="206"/>
    </location>
</feature>
<feature type="helix" evidence="5">
    <location>
        <begin position="214"/>
        <end position="227"/>
    </location>
</feature>
<feature type="strand" evidence="5">
    <location>
        <begin position="233"/>
        <end position="237"/>
    </location>
</feature>
<feature type="strand" evidence="5">
    <location>
        <begin position="240"/>
        <end position="243"/>
    </location>
</feature>
<protein>
    <recommendedName>
        <fullName>Alcohol dehydrogenase</fullName>
        <ecNumber>1.1.1.1</ecNumber>
    </recommendedName>
</protein>
<keyword id="KW-0002">3D-structure</keyword>
<keyword id="KW-0007">Acetylation</keyword>
<keyword id="KW-0903">Direct protein sequencing</keyword>
<keyword id="KW-0520">NAD</keyword>
<keyword id="KW-0560">Oxidoreductase</keyword>
<keyword id="KW-1185">Reference proteome</keyword>
<comment type="catalytic activity">
    <reaction evidence="1">
        <text>a primary alcohol + NAD(+) = an aldehyde + NADH + H(+)</text>
        <dbReference type="Rhea" id="RHEA:10736"/>
        <dbReference type="ChEBI" id="CHEBI:15378"/>
        <dbReference type="ChEBI" id="CHEBI:15734"/>
        <dbReference type="ChEBI" id="CHEBI:17478"/>
        <dbReference type="ChEBI" id="CHEBI:57540"/>
        <dbReference type="ChEBI" id="CHEBI:57945"/>
        <dbReference type="EC" id="1.1.1.1"/>
    </reaction>
</comment>
<comment type="catalytic activity">
    <reaction evidence="1">
        <text>a secondary alcohol + NAD(+) = a ketone + NADH + H(+)</text>
        <dbReference type="Rhea" id="RHEA:10740"/>
        <dbReference type="ChEBI" id="CHEBI:15378"/>
        <dbReference type="ChEBI" id="CHEBI:17087"/>
        <dbReference type="ChEBI" id="CHEBI:35681"/>
        <dbReference type="ChEBI" id="CHEBI:57540"/>
        <dbReference type="ChEBI" id="CHEBI:57945"/>
        <dbReference type="EC" id="1.1.1.1"/>
    </reaction>
</comment>
<comment type="subunit">
    <text evidence="2">Homodimer.</text>
</comment>
<comment type="interaction">
    <interactant intactId="EBI-7944097">
        <id>P10807</id>
    </interactant>
    <interactant intactId="EBI-7944097">
        <id>P10807</id>
        <label>Adh</label>
    </interactant>
    <organismsDiffer>false</organismsDiffer>
    <experiments>2</experiments>
</comment>
<comment type="similarity">
    <text evidence="4">Belongs to the short-chain dehydrogenases/reductases (SDR) family.</text>
</comment>